<accession>Q8DN92</accession>
<proteinExistence type="inferred from homology"/>
<dbReference type="EC" id="3.1.26.5" evidence="1"/>
<dbReference type="EMBL" id="AE007317">
    <property type="protein sequence ID" value="AAL00656.1"/>
    <property type="molecule type" value="Genomic_DNA"/>
</dbReference>
<dbReference type="PIR" id="C98103">
    <property type="entry name" value="C98103"/>
</dbReference>
<dbReference type="RefSeq" id="NP_359445.1">
    <property type="nucleotide sequence ID" value="NC_003098.1"/>
</dbReference>
<dbReference type="RefSeq" id="WP_000739246.1">
    <property type="nucleotide sequence ID" value="NC_003098.1"/>
</dbReference>
<dbReference type="SMR" id="Q8DN92"/>
<dbReference type="STRING" id="171101.spr1853"/>
<dbReference type="GeneID" id="45652735"/>
<dbReference type="KEGG" id="spr:spr1853"/>
<dbReference type="PATRIC" id="fig|171101.6.peg.1999"/>
<dbReference type="eggNOG" id="COG0594">
    <property type="taxonomic scope" value="Bacteria"/>
</dbReference>
<dbReference type="HOGENOM" id="CLU_117179_9_1_9"/>
<dbReference type="Proteomes" id="UP000000586">
    <property type="component" value="Chromosome"/>
</dbReference>
<dbReference type="GO" id="GO:0030677">
    <property type="term" value="C:ribonuclease P complex"/>
    <property type="evidence" value="ECO:0000318"/>
    <property type="project" value="GO_Central"/>
</dbReference>
<dbReference type="GO" id="GO:0042781">
    <property type="term" value="F:3'-tRNA processing endoribonuclease activity"/>
    <property type="evidence" value="ECO:0000318"/>
    <property type="project" value="GO_Central"/>
</dbReference>
<dbReference type="GO" id="GO:0004526">
    <property type="term" value="F:ribonuclease P activity"/>
    <property type="evidence" value="ECO:0000318"/>
    <property type="project" value="GO_Central"/>
</dbReference>
<dbReference type="GO" id="GO:0000049">
    <property type="term" value="F:tRNA binding"/>
    <property type="evidence" value="ECO:0007669"/>
    <property type="project" value="UniProtKB-UniRule"/>
</dbReference>
<dbReference type="GO" id="GO:0042780">
    <property type="term" value="P:tRNA 3'-end processing"/>
    <property type="evidence" value="ECO:0000318"/>
    <property type="project" value="GO_Central"/>
</dbReference>
<dbReference type="GO" id="GO:0001682">
    <property type="term" value="P:tRNA 5'-leader removal"/>
    <property type="evidence" value="ECO:0007669"/>
    <property type="project" value="UniProtKB-UniRule"/>
</dbReference>
<dbReference type="FunFam" id="3.30.230.10:FF:000021">
    <property type="entry name" value="Ribonuclease P protein component"/>
    <property type="match status" value="1"/>
</dbReference>
<dbReference type="Gene3D" id="3.30.230.10">
    <property type="match status" value="1"/>
</dbReference>
<dbReference type="HAMAP" id="MF_00227">
    <property type="entry name" value="RNase_P"/>
    <property type="match status" value="1"/>
</dbReference>
<dbReference type="InterPro" id="IPR020568">
    <property type="entry name" value="Ribosomal_Su5_D2-typ_SF"/>
</dbReference>
<dbReference type="InterPro" id="IPR014721">
    <property type="entry name" value="Ribsml_uS5_D2-typ_fold_subgr"/>
</dbReference>
<dbReference type="InterPro" id="IPR000100">
    <property type="entry name" value="RNase_P"/>
</dbReference>
<dbReference type="InterPro" id="IPR020539">
    <property type="entry name" value="RNase_P_CS"/>
</dbReference>
<dbReference type="NCBIfam" id="TIGR00188">
    <property type="entry name" value="rnpA"/>
    <property type="match status" value="1"/>
</dbReference>
<dbReference type="PANTHER" id="PTHR33992">
    <property type="entry name" value="RIBONUCLEASE P PROTEIN COMPONENT"/>
    <property type="match status" value="1"/>
</dbReference>
<dbReference type="PANTHER" id="PTHR33992:SF1">
    <property type="entry name" value="RIBONUCLEASE P PROTEIN COMPONENT"/>
    <property type="match status" value="1"/>
</dbReference>
<dbReference type="Pfam" id="PF00825">
    <property type="entry name" value="Ribonuclease_P"/>
    <property type="match status" value="1"/>
</dbReference>
<dbReference type="SUPFAM" id="SSF54211">
    <property type="entry name" value="Ribosomal protein S5 domain 2-like"/>
    <property type="match status" value="1"/>
</dbReference>
<dbReference type="PROSITE" id="PS00648">
    <property type="entry name" value="RIBONUCLEASE_P"/>
    <property type="match status" value="1"/>
</dbReference>
<organism>
    <name type="scientific">Streptococcus pneumoniae (strain ATCC BAA-255 / R6)</name>
    <dbReference type="NCBI Taxonomy" id="171101"/>
    <lineage>
        <taxon>Bacteria</taxon>
        <taxon>Bacillati</taxon>
        <taxon>Bacillota</taxon>
        <taxon>Bacilli</taxon>
        <taxon>Lactobacillales</taxon>
        <taxon>Streptococcaceae</taxon>
        <taxon>Streptococcus</taxon>
    </lineage>
</organism>
<reference key="1">
    <citation type="journal article" date="2001" name="J. Bacteriol.">
        <title>Genome of the bacterium Streptococcus pneumoniae strain R6.</title>
        <authorList>
            <person name="Hoskins J."/>
            <person name="Alborn W.E. Jr."/>
            <person name="Arnold J."/>
            <person name="Blaszczak L.C."/>
            <person name="Burgett S."/>
            <person name="DeHoff B.S."/>
            <person name="Estrem S.T."/>
            <person name="Fritz L."/>
            <person name="Fu D.-J."/>
            <person name="Fuller W."/>
            <person name="Geringer C."/>
            <person name="Gilmour R."/>
            <person name="Glass J.S."/>
            <person name="Khoja H."/>
            <person name="Kraft A.R."/>
            <person name="Lagace R.E."/>
            <person name="LeBlanc D.J."/>
            <person name="Lee L.N."/>
            <person name="Lefkowitz E.J."/>
            <person name="Lu J."/>
            <person name="Matsushima P."/>
            <person name="McAhren S.M."/>
            <person name="McHenney M."/>
            <person name="McLeaster K."/>
            <person name="Mundy C.W."/>
            <person name="Nicas T.I."/>
            <person name="Norris F.H."/>
            <person name="O'Gara M."/>
            <person name="Peery R.B."/>
            <person name="Robertson G.T."/>
            <person name="Rockey P."/>
            <person name="Sun P.-M."/>
            <person name="Winkler M.E."/>
            <person name="Yang Y."/>
            <person name="Young-Bellido M."/>
            <person name="Zhao G."/>
            <person name="Zook C.A."/>
            <person name="Baltz R.H."/>
            <person name="Jaskunas S.R."/>
            <person name="Rosteck P.R. Jr."/>
            <person name="Skatrud P.L."/>
            <person name="Glass J.I."/>
        </authorList>
    </citation>
    <scope>NUCLEOTIDE SEQUENCE [LARGE SCALE GENOMIC DNA]</scope>
    <source>
        <strain>ATCC BAA-255 / R6</strain>
    </source>
</reference>
<gene>
    <name evidence="1" type="primary">rnpA</name>
    <name type="ordered locus">spr1853</name>
</gene>
<name>RNPA_STRR6</name>
<keyword id="KW-0255">Endonuclease</keyword>
<keyword id="KW-0378">Hydrolase</keyword>
<keyword id="KW-0540">Nuclease</keyword>
<keyword id="KW-1185">Reference proteome</keyword>
<keyword id="KW-0694">RNA-binding</keyword>
<keyword id="KW-0819">tRNA processing</keyword>
<comment type="function">
    <text evidence="1">RNaseP catalyzes the removal of the 5'-leader sequence from pre-tRNA to produce the mature 5'-terminus. It can also cleave other RNA substrates such as 4.5S RNA. The protein component plays an auxiliary but essential role in vivo by binding to the 5'-leader sequence and broadening the substrate specificity of the ribozyme.</text>
</comment>
<comment type="catalytic activity">
    <reaction evidence="1">
        <text>Endonucleolytic cleavage of RNA, removing 5'-extranucleotides from tRNA precursor.</text>
        <dbReference type="EC" id="3.1.26.5"/>
    </reaction>
</comment>
<comment type="subunit">
    <text evidence="1">Consists of a catalytic RNA component (M1 or rnpB) and a protein subunit.</text>
</comment>
<comment type="similarity">
    <text evidence="1">Belongs to the RnpA family.</text>
</comment>
<evidence type="ECO:0000255" key="1">
    <source>
        <dbReference type="HAMAP-Rule" id="MF_00227"/>
    </source>
</evidence>
<sequence>MKKNFRVKREKDFKAIFKEGTSFANRKFVVYQLENQKNHFRVGLSVSKKLGNAVTRNQIKRRIRHIIQNAKGSLVEDVDFVVIARKGVETLGYAEMEKNLLHVLKLSKIYREGNGSEKETKVD</sequence>
<feature type="chain" id="PRO_0000198541" description="Ribonuclease P protein component">
    <location>
        <begin position="1"/>
        <end position="123"/>
    </location>
</feature>
<protein>
    <recommendedName>
        <fullName evidence="1">Ribonuclease P protein component</fullName>
        <shortName evidence="1">RNase P protein</shortName>
        <shortName evidence="1">RNaseP protein</shortName>
        <ecNumber evidence="1">3.1.26.5</ecNumber>
    </recommendedName>
    <alternativeName>
        <fullName evidence="1">Protein C5</fullName>
    </alternativeName>
</protein>